<sequence length="251" mass="28105">MSEGESKNTHFGYKTVEADKKADLVAGVFHSVAAKYDIMNDVMSFGIHRFWKRYTIEVSGARPGMKVLDLAGGTGDLTAKFSHLVGEKGEVVLADINDSMLKVGRTKLRDRGIVGNVSYVQANAEALPFPDNHFDIITIAFGLRNVTDKDAALRSMNRVLKPGGKLLVLEFSKPQHELMRKVYDLYSFKVLPKMGEIITKDADSYEYLAESIRMHPDQETLKQMMVDAGFEQVDYTNMTDGIVALHRGYKF</sequence>
<accession>A0L1M4</accession>
<keyword id="KW-0474">Menaquinone biosynthesis</keyword>
<keyword id="KW-0489">Methyltransferase</keyword>
<keyword id="KW-0949">S-adenosyl-L-methionine</keyword>
<keyword id="KW-0808">Transferase</keyword>
<keyword id="KW-0831">Ubiquinone biosynthesis</keyword>
<protein>
    <recommendedName>
        <fullName evidence="1">Ubiquinone/menaquinone biosynthesis C-methyltransferase UbiE</fullName>
        <ecNumber evidence="1">2.1.1.163</ecNumber>
        <ecNumber evidence="1">2.1.1.201</ecNumber>
    </recommendedName>
    <alternativeName>
        <fullName evidence="1">2-methoxy-6-polyprenyl-1,4-benzoquinol methylase</fullName>
    </alternativeName>
    <alternativeName>
        <fullName evidence="1">Demethylmenaquinone methyltransferase</fullName>
    </alternativeName>
</protein>
<comment type="function">
    <text evidence="1">Methyltransferase required for the conversion of demethylmenaquinol (DMKH2) to menaquinol (MKH2) and the conversion of 2-polyprenyl-6-methoxy-1,4-benzoquinol (DDMQH2) to 2-polyprenyl-3-methyl-6-methoxy-1,4-benzoquinol (DMQH2).</text>
</comment>
<comment type="catalytic activity">
    <reaction evidence="1">
        <text>a 2-demethylmenaquinol + S-adenosyl-L-methionine = a menaquinol + S-adenosyl-L-homocysteine + H(+)</text>
        <dbReference type="Rhea" id="RHEA:42640"/>
        <dbReference type="Rhea" id="RHEA-COMP:9539"/>
        <dbReference type="Rhea" id="RHEA-COMP:9563"/>
        <dbReference type="ChEBI" id="CHEBI:15378"/>
        <dbReference type="ChEBI" id="CHEBI:18151"/>
        <dbReference type="ChEBI" id="CHEBI:55437"/>
        <dbReference type="ChEBI" id="CHEBI:57856"/>
        <dbReference type="ChEBI" id="CHEBI:59789"/>
        <dbReference type="EC" id="2.1.1.163"/>
    </reaction>
</comment>
<comment type="catalytic activity">
    <reaction evidence="1">
        <text>a 2-methoxy-6-(all-trans-polyprenyl)benzene-1,4-diol + S-adenosyl-L-methionine = a 5-methoxy-2-methyl-3-(all-trans-polyprenyl)benzene-1,4-diol + S-adenosyl-L-homocysteine + H(+)</text>
        <dbReference type="Rhea" id="RHEA:28286"/>
        <dbReference type="Rhea" id="RHEA-COMP:10858"/>
        <dbReference type="Rhea" id="RHEA-COMP:10859"/>
        <dbReference type="ChEBI" id="CHEBI:15378"/>
        <dbReference type="ChEBI" id="CHEBI:57856"/>
        <dbReference type="ChEBI" id="CHEBI:59789"/>
        <dbReference type="ChEBI" id="CHEBI:84166"/>
        <dbReference type="ChEBI" id="CHEBI:84167"/>
        <dbReference type="EC" id="2.1.1.201"/>
    </reaction>
</comment>
<comment type="pathway">
    <text evidence="1">Quinol/quinone metabolism; menaquinone biosynthesis; menaquinol from 1,4-dihydroxy-2-naphthoate: step 2/2.</text>
</comment>
<comment type="pathway">
    <text evidence="1">Cofactor biosynthesis; ubiquinone biosynthesis.</text>
</comment>
<comment type="similarity">
    <text evidence="1">Belongs to the class I-like SAM-binding methyltransferase superfamily. MenG/UbiE family.</text>
</comment>
<evidence type="ECO:0000255" key="1">
    <source>
        <dbReference type="HAMAP-Rule" id="MF_01813"/>
    </source>
</evidence>
<reference key="1">
    <citation type="submission" date="2006-09" db="EMBL/GenBank/DDBJ databases">
        <title>Complete sequence of chromosome 1 of Shewanella sp. ANA-3.</title>
        <authorList>
            <person name="Copeland A."/>
            <person name="Lucas S."/>
            <person name="Lapidus A."/>
            <person name="Barry K."/>
            <person name="Detter J.C."/>
            <person name="Glavina del Rio T."/>
            <person name="Hammon N."/>
            <person name="Israni S."/>
            <person name="Dalin E."/>
            <person name="Tice H."/>
            <person name="Pitluck S."/>
            <person name="Chertkov O."/>
            <person name="Brettin T."/>
            <person name="Bruce D."/>
            <person name="Han C."/>
            <person name="Tapia R."/>
            <person name="Gilna P."/>
            <person name="Schmutz J."/>
            <person name="Larimer F."/>
            <person name="Land M."/>
            <person name="Hauser L."/>
            <person name="Kyrpides N."/>
            <person name="Kim E."/>
            <person name="Newman D."/>
            <person name="Salticov C."/>
            <person name="Konstantinidis K."/>
            <person name="Klappenback J."/>
            <person name="Tiedje J."/>
            <person name="Richardson P."/>
        </authorList>
    </citation>
    <scope>NUCLEOTIDE SEQUENCE [LARGE SCALE GENOMIC DNA]</scope>
    <source>
        <strain>ANA-3</strain>
    </source>
</reference>
<organism>
    <name type="scientific">Shewanella sp. (strain ANA-3)</name>
    <dbReference type="NCBI Taxonomy" id="94122"/>
    <lineage>
        <taxon>Bacteria</taxon>
        <taxon>Pseudomonadati</taxon>
        <taxon>Pseudomonadota</taxon>
        <taxon>Gammaproteobacteria</taxon>
        <taxon>Alteromonadales</taxon>
        <taxon>Shewanellaceae</taxon>
        <taxon>Shewanella</taxon>
    </lineage>
</organism>
<proteinExistence type="inferred from homology"/>
<gene>
    <name evidence="1" type="primary">ubiE</name>
    <name type="ordered locus">Shewana3_3725</name>
</gene>
<feature type="chain" id="PRO_1000056299" description="Ubiquinone/menaquinone biosynthesis C-methyltransferase UbiE">
    <location>
        <begin position="1"/>
        <end position="251"/>
    </location>
</feature>
<feature type="binding site" evidence="1">
    <location>
        <position position="74"/>
    </location>
    <ligand>
        <name>S-adenosyl-L-methionine</name>
        <dbReference type="ChEBI" id="CHEBI:59789"/>
    </ligand>
</feature>
<feature type="binding site" evidence="1">
    <location>
        <position position="95"/>
    </location>
    <ligand>
        <name>S-adenosyl-L-methionine</name>
        <dbReference type="ChEBI" id="CHEBI:59789"/>
    </ligand>
</feature>
<feature type="binding site" evidence="1">
    <location>
        <begin position="123"/>
        <end position="124"/>
    </location>
    <ligand>
        <name>S-adenosyl-L-methionine</name>
        <dbReference type="ChEBI" id="CHEBI:59789"/>
    </ligand>
</feature>
<name>UBIE_SHESA</name>
<dbReference type="EC" id="2.1.1.163" evidence="1"/>
<dbReference type="EC" id="2.1.1.201" evidence="1"/>
<dbReference type="EMBL" id="CP000469">
    <property type="protein sequence ID" value="ABK49943.1"/>
    <property type="molecule type" value="Genomic_DNA"/>
</dbReference>
<dbReference type="RefSeq" id="WP_011624280.1">
    <property type="nucleotide sequence ID" value="NC_008577.1"/>
</dbReference>
<dbReference type="SMR" id="A0L1M4"/>
<dbReference type="STRING" id="94122.Shewana3_3725"/>
<dbReference type="GeneID" id="94729646"/>
<dbReference type="KEGG" id="shn:Shewana3_3725"/>
<dbReference type="eggNOG" id="COG2226">
    <property type="taxonomic scope" value="Bacteria"/>
</dbReference>
<dbReference type="HOGENOM" id="CLU_037990_0_0_6"/>
<dbReference type="OrthoDB" id="9808140at2"/>
<dbReference type="UniPathway" id="UPA00079">
    <property type="reaction ID" value="UER00169"/>
</dbReference>
<dbReference type="UniPathway" id="UPA00232"/>
<dbReference type="Proteomes" id="UP000002589">
    <property type="component" value="Chromosome"/>
</dbReference>
<dbReference type="GO" id="GO:0008425">
    <property type="term" value="F:2-methoxy-6-polyprenyl-1,4-benzoquinol methyltransferase activity"/>
    <property type="evidence" value="ECO:0007669"/>
    <property type="project" value="UniProtKB-UniRule"/>
</dbReference>
<dbReference type="GO" id="GO:0043770">
    <property type="term" value="F:demethylmenaquinone methyltransferase activity"/>
    <property type="evidence" value="ECO:0007669"/>
    <property type="project" value="UniProtKB-UniRule"/>
</dbReference>
<dbReference type="GO" id="GO:0009060">
    <property type="term" value="P:aerobic respiration"/>
    <property type="evidence" value="ECO:0007669"/>
    <property type="project" value="UniProtKB-UniRule"/>
</dbReference>
<dbReference type="GO" id="GO:0009234">
    <property type="term" value="P:menaquinone biosynthetic process"/>
    <property type="evidence" value="ECO:0007669"/>
    <property type="project" value="UniProtKB-UniRule"/>
</dbReference>
<dbReference type="GO" id="GO:0032259">
    <property type="term" value="P:methylation"/>
    <property type="evidence" value="ECO:0007669"/>
    <property type="project" value="UniProtKB-KW"/>
</dbReference>
<dbReference type="CDD" id="cd02440">
    <property type="entry name" value="AdoMet_MTases"/>
    <property type="match status" value="1"/>
</dbReference>
<dbReference type="FunFam" id="3.40.50.150:FF:000014">
    <property type="entry name" value="Ubiquinone/menaquinone biosynthesis C-methyltransferase UbiE"/>
    <property type="match status" value="1"/>
</dbReference>
<dbReference type="Gene3D" id="3.40.50.150">
    <property type="entry name" value="Vaccinia Virus protein VP39"/>
    <property type="match status" value="1"/>
</dbReference>
<dbReference type="HAMAP" id="MF_01813">
    <property type="entry name" value="MenG_UbiE_methyltr"/>
    <property type="match status" value="1"/>
</dbReference>
<dbReference type="InterPro" id="IPR029063">
    <property type="entry name" value="SAM-dependent_MTases_sf"/>
</dbReference>
<dbReference type="InterPro" id="IPR004033">
    <property type="entry name" value="UbiE/COQ5_MeTrFase"/>
</dbReference>
<dbReference type="InterPro" id="IPR023576">
    <property type="entry name" value="UbiE/COQ5_MeTrFase_CS"/>
</dbReference>
<dbReference type="NCBIfam" id="TIGR01934">
    <property type="entry name" value="MenG_MenH_UbiE"/>
    <property type="match status" value="1"/>
</dbReference>
<dbReference type="NCBIfam" id="NF001240">
    <property type="entry name" value="PRK00216.1-1"/>
    <property type="match status" value="1"/>
</dbReference>
<dbReference type="NCBIfam" id="NF001242">
    <property type="entry name" value="PRK00216.1-3"/>
    <property type="match status" value="1"/>
</dbReference>
<dbReference type="NCBIfam" id="NF001244">
    <property type="entry name" value="PRK00216.1-5"/>
    <property type="match status" value="1"/>
</dbReference>
<dbReference type="PANTHER" id="PTHR43591:SF24">
    <property type="entry name" value="2-METHOXY-6-POLYPRENYL-1,4-BENZOQUINOL METHYLASE, MITOCHONDRIAL"/>
    <property type="match status" value="1"/>
</dbReference>
<dbReference type="PANTHER" id="PTHR43591">
    <property type="entry name" value="METHYLTRANSFERASE"/>
    <property type="match status" value="1"/>
</dbReference>
<dbReference type="Pfam" id="PF01209">
    <property type="entry name" value="Ubie_methyltran"/>
    <property type="match status" value="1"/>
</dbReference>
<dbReference type="SUPFAM" id="SSF53335">
    <property type="entry name" value="S-adenosyl-L-methionine-dependent methyltransferases"/>
    <property type="match status" value="1"/>
</dbReference>
<dbReference type="PROSITE" id="PS51608">
    <property type="entry name" value="SAM_MT_UBIE"/>
    <property type="match status" value="1"/>
</dbReference>
<dbReference type="PROSITE" id="PS01183">
    <property type="entry name" value="UBIE_1"/>
    <property type="match status" value="1"/>
</dbReference>
<dbReference type="PROSITE" id="PS01184">
    <property type="entry name" value="UBIE_2"/>
    <property type="match status" value="1"/>
</dbReference>